<dbReference type="EC" id="3.4.23.-" evidence="2"/>
<dbReference type="EMBL" id="CH445351">
    <property type="protein sequence ID" value="EAT78975.2"/>
    <property type="status" value="ALT_SEQ"/>
    <property type="molecule type" value="Genomic_DNA"/>
</dbReference>
<dbReference type="RefSeq" id="XP_001803736.1">
    <property type="nucleotide sequence ID" value="XM_001803684.1"/>
</dbReference>
<dbReference type="SMR" id="Q0U3Y6"/>
<dbReference type="FunCoup" id="Q0U3Y6">
    <property type="interactions" value="274"/>
</dbReference>
<dbReference type="STRING" id="321614.Q0U3Y6"/>
<dbReference type="MEROPS" id="A28.A06"/>
<dbReference type="GeneID" id="5980656"/>
<dbReference type="KEGG" id="pno:SNOG_13528"/>
<dbReference type="VEuPathDB" id="FungiDB:JI435_135280"/>
<dbReference type="eggNOG" id="KOG0012">
    <property type="taxonomic scope" value="Eukaryota"/>
</dbReference>
<dbReference type="InParanoid" id="Q0U3Y6"/>
<dbReference type="Proteomes" id="UP000001055">
    <property type="component" value="Unassembled WGS sequence"/>
</dbReference>
<dbReference type="GO" id="GO:0005737">
    <property type="term" value="C:cytoplasm"/>
    <property type="evidence" value="ECO:0007669"/>
    <property type="project" value="UniProtKB-SubCell"/>
</dbReference>
<dbReference type="GO" id="GO:0004190">
    <property type="term" value="F:aspartic-type endopeptidase activity"/>
    <property type="evidence" value="ECO:0007669"/>
    <property type="project" value="UniProtKB-KW"/>
</dbReference>
<dbReference type="GO" id="GO:0015031">
    <property type="term" value="P:protein transport"/>
    <property type="evidence" value="ECO:0007669"/>
    <property type="project" value="UniProtKB-KW"/>
</dbReference>
<dbReference type="GO" id="GO:0006508">
    <property type="term" value="P:proteolysis"/>
    <property type="evidence" value="ECO:0007669"/>
    <property type="project" value="UniProtKB-KW"/>
</dbReference>
<dbReference type="CDD" id="cd05479">
    <property type="entry name" value="RP_DDI"/>
    <property type="match status" value="1"/>
</dbReference>
<dbReference type="CDD" id="cd14309">
    <property type="entry name" value="UBA_scDdi1_like"/>
    <property type="match status" value="1"/>
</dbReference>
<dbReference type="CDD" id="cd01796">
    <property type="entry name" value="Ubl_Ddi1_like"/>
    <property type="match status" value="1"/>
</dbReference>
<dbReference type="Gene3D" id="2.40.70.10">
    <property type="entry name" value="Acid Proteases"/>
    <property type="match status" value="1"/>
</dbReference>
<dbReference type="Gene3D" id="1.10.8.10">
    <property type="entry name" value="DNA helicase RuvA subunit, C-terminal domain"/>
    <property type="match status" value="1"/>
</dbReference>
<dbReference type="Gene3D" id="3.10.20.90">
    <property type="entry name" value="Phosphatidylinositol 3-kinase Catalytic Subunit, Chain A, domain 1"/>
    <property type="match status" value="1"/>
</dbReference>
<dbReference type="InterPro" id="IPR033882">
    <property type="entry name" value="DDI1_N"/>
</dbReference>
<dbReference type="InterPro" id="IPR019103">
    <property type="entry name" value="Peptidase_aspartic_DDI1-type"/>
</dbReference>
<dbReference type="InterPro" id="IPR021109">
    <property type="entry name" value="Peptidase_aspartic_dom_sf"/>
</dbReference>
<dbReference type="InterPro" id="IPR015940">
    <property type="entry name" value="UBA"/>
</dbReference>
<dbReference type="InterPro" id="IPR009060">
    <property type="entry name" value="UBA-like_sf"/>
</dbReference>
<dbReference type="InterPro" id="IPR000626">
    <property type="entry name" value="Ubiquitin-like_dom"/>
</dbReference>
<dbReference type="InterPro" id="IPR029071">
    <property type="entry name" value="Ubiquitin-like_domsf"/>
</dbReference>
<dbReference type="PANTHER" id="PTHR12917">
    <property type="entry name" value="ASPARTYL PROTEASE DDI-RELATED"/>
    <property type="match status" value="1"/>
</dbReference>
<dbReference type="PANTHER" id="PTHR12917:SF1">
    <property type="entry name" value="AT13091P"/>
    <property type="match status" value="1"/>
</dbReference>
<dbReference type="Pfam" id="PF09668">
    <property type="entry name" value="Asp_protease"/>
    <property type="match status" value="1"/>
</dbReference>
<dbReference type="Pfam" id="PF00627">
    <property type="entry name" value="UBA"/>
    <property type="match status" value="1"/>
</dbReference>
<dbReference type="Pfam" id="PF00240">
    <property type="entry name" value="ubiquitin"/>
    <property type="match status" value="1"/>
</dbReference>
<dbReference type="SMART" id="SM00165">
    <property type="entry name" value="UBA"/>
    <property type="match status" value="1"/>
</dbReference>
<dbReference type="SMART" id="SM00213">
    <property type="entry name" value="UBQ"/>
    <property type="match status" value="1"/>
</dbReference>
<dbReference type="SUPFAM" id="SSF50630">
    <property type="entry name" value="Acid proteases"/>
    <property type="match status" value="1"/>
</dbReference>
<dbReference type="SUPFAM" id="SSF46934">
    <property type="entry name" value="UBA-like"/>
    <property type="match status" value="1"/>
</dbReference>
<dbReference type="SUPFAM" id="SSF54236">
    <property type="entry name" value="Ubiquitin-like"/>
    <property type="match status" value="1"/>
</dbReference>
<dbReference type="PROSITE" id="PS50030">
    <property type="entry name" value="UBA"/>
    <property type="match status" value="1"/>
</dbReference>
<dbReference type="PROSITE" id="PS50053">
    <property type="entry name" value="UBIQUITIN_2"/>
    <property type="match status" value="1"/>
</dbReference>
<protein>
    <recommendedName>
        <fullName>DNA damage-inducible protein 1</fullName>
        <ecNumber evidence="2">3.4.23.-</ecNumber>
    </recommendedName>
</protein>
<sequence length="442" mass="47556">MPRVTISITAPGTPSDGELLTLELPPGSTVKDLKGFIEAETNLPAASQGIYLNGQPVSQETQTLENVGIRDGEMLAVIVRQNRQQPQQPAASRPAPVGQSDPEAVRQQVLRNPQVQAELRQRDPELLAIMNDADRWREAFASRQNSAQNAERERQNQIALLNEDPFNVEAQRKIEDIIRQERVVENLEKAYNENPEVFVRVHMLYINTEVNGVPVKAFVDSGAQATIMSPDCAERCGIMRLMDTRYAGMARGVGTARILGRVHHAEIKIGGAVMPCAFTVMEGKDVDLLFGLDMLKRYKAKIDLEKNALCFESIEVPFLHESEIPRNLDEAEMNEPTVAGPNGTEIGARSGAVRPAGGSAAVEPSTQAGPSAAGPSSASTPAPAPAQTAPAPSAPGPSTASSFPEEHINQLMSMFGVARQEAIQALEIASGNVDEAASVFLG</sequence>
<comment type="function">
    <text evidence="2 3">Probable aspartic protease. May be involved in the regulation of exocytosis. Acts as a linker between the 19S proteasome and polyubiquitinated proteins via UBA domain interactions with ubiquitin for their subsequent degradation. Required for S-phase checkpoint control.</text>
</comment>
<comment type="subunit">
    <text evidence="1">Binds ubiquitin and polyubiquitinated proteins.</text>
</comment>
<comment type="subcellular location">
    <subcellularLocation>
        <location evidence="1">Cytoplasm</location>
    </subcellularLocation>
</comment>
<comment type="similarity">
    <text evidence="7">Belongs to the DDI1 family.</text>
</comment>
<comment type="sequence caution" evidence="7">
    <conflict type="erroneous gene model prediction">
        <sequence resource="EMBL-CDS" id="EAT78975"/>
    </conflict>
</comment>
<feature type="chain" id="PRO_0000285318" description="DNA damage-inducible protein 1">
    <location>
        <begin position="1"/>
        <end position="442"/>
    </location>
</feature>
<feature type="domain" description="Ubiquitin-like" evidence="5">
    <location>
        <begin position="4"/>
        <end position="84"/>
    </location>
</feature>
<feature type="domain" description="UBA" evidence="4">
    <location>
        <begin position="402"/>
        <end position="442"/>
    </location>
</feature>
<feature type="region of interest" description="Disordered" evidence="6">
    <location>
        <begin position="82"/>
        <end position="102"/>
    </location>
</feature>
<feature type="region of interest" description="Disordered" evidence="6">
    <location>
        <begin position="333"/>
        <end position="403"/>
    </location>
</feature>
<feature type="compositionally biased region" description="Low complexity" evidence="6">
    <location>
        <begin position="82"/>
        <end position="96"/>
    </location>
</feature>
<feature type="compositionally biased region" description="Low complexity" evidence="6">
    <location>
        <begin position="364"/>
        <end position="402"/>
    </location>
</feature>
<feature type="active site" evidence="7">
    <location>
        <position position="220"/>
    </location>
</feature>
<reference key="1">
    <citation type="journal article" date="2007" name="Plant Cell">
        <title>Dothideomycete-plant interactions illuminated by genome sequencing and EST analysis of the wheat pathogen Stagonospora nodorum.</title>
        <authorList>
            <person name="Hane J.K."/>
            <person name="Lowe R.G.T."/>
            <person name="Solomon P.S."/>
            <person name="Tan K.-C."/>
            <person name="Schoch C.L."/>
            <person name="Spatafora J.W."/>
            <person name="Crous P.W."/>
            <person name="Kodira C.D."/>
            <person name="Birren B.W."/>
            <person name="Galagan J.E."/>
            <person name="Torriani S.F.F."/>
            <person name="McDonald B.A."/>
            <person name="Oliver R.P."/>
        </authorList>
    </citation>
    <scope>NUCLEOTIDE SEQUENCE [LARGE SCALE GENOMIC DNA]</scope>
    <source>
        <strain>SN15 / ATCC MYA-4574 / FGSC 10173</strain>
    </source>
</reference>
<evidence type="ECO:0000250" key="1"/>
<evidence type="ECO:0000250" key="2">
    <source>
        <dbReference type="UniProtKB" id="I7HUG0"/>
    </source>
</evidence>
<evidence type="ECO:0000250" key="3">
    <source>
        <dbReference type="UniProtKB" id="P40087"/>
    </source>
</evidence>
<evidence type="ECO:0000255" key="4">
    <source>
        <dbReference type="PROSITE-ProRule" id="PRU00212"/>
    </source>
</evidence>
<evidence type="ECO:0000255" key="5">
    <source>
        <dbReference type="PROSITE-ProRule" id="PRU00214"/>
    </source>
</evidence>
<evidence type="ECO:0000256" key="6">
    <source>
        <dbReference type="SAM" id="MobiDB-lite"/>
    </source>
</evidence>
<evidence type="ECO:0000305" key="7"/>
<keyword id="KW-0064">Aspartyl protease</keyword>
<keyword id="KW-0963">Cytoplasm</keyword>
<keyword id="KW-0378">Hydrolase</keyword>
<keyword id="KW-0645">Protease</keyword>
<keyword id="KW-0653">Protein transport</keyword>
<keyword id="KW-0813">Transport</keyword>
<accession>Q0U3Y6</accession>
<name>DDI1_PHANO</name>
<proteinExistence type="inferred from homology"/>
<gene>
    <name type="primary">DDI1</name>
    <name type="ORF">SNOG_13528</name>
</gene>
<organism>
    <name type="scientific">Phaeosphaeria nodorum (strain SN15 / ATCC MYA-4574 / FGSC 10173)</name>
    <name type="common">Glume blotch fungus</name>
    <name type="synonym">Parastagonospora nodorum</name>
    <dbReference type="NCBI Taxonomy" id="321614"/>
    <lineage>
        <taxon>Eukaryota</taxon>
        <taxon>Fungi</taxon>
        <taxon>Dikarya</taxon>
        <taxon>Ascomycota</taxon>
        <taxon>Pezizomycotina</taxon>
        <taxon>Dothideomycetes</taxon>
        <taxon>Pleosporomycetidae</taxon>
        <taxon>Pleosporales</taxon>
        <taxon>Pleosporineae</taxon>
        <taxon>Phaeosphaeriaceae</taxon>
        <taxon>Parastagonospora</taxon>
    </lineage>
</organism>